<proteinExistence type="inferred from homology"/>
<accession>Q1G948</accession>
<organism>
    <name type="scientific">Lactobacillus delbrueckii subsp. bulgaricus (strain ATCC 11842 / DSM 20081 / BCRC 10696 / JCM 1002 / NBRC 13953 / NCIMB 11778 / NCTC 12712 / WDCM 00102 / Lb 14)</name>
    <dbReference type="NCBI Taxonomy" id="390333"/>
    <lineage>
        <taxon>Bacteria</taxon>
        <taxon>Bacillati</taxon>
        <taxon>Bacillota</taxon>
        <taxon>Bacilli</taxon>
        <taxon>Lactobacillales</taxon>
        <taxon>Lactobacillaceae</taxon>
        <taxon>Lactobacillus</taxon>
    </lineage>
</organism>
<comment type="similarity">
    <text evidence="1">Belongs to the UPF0297 family.</text>
</comment>
<gene>
    <name type="ordered locus">Ldb1606</name>
</gene>
<evidence type="ECO:0000255" key="1">
    <source>
        <dbReference type="HAMAP-Rule" id="MF_01507"/>
    </source>
</evidence>
<sequence length="85" mass="9881">MSSLDKTMHFDFNQNKGKNIRDTLEDVYKALEEKGYSPINQIVGYLLSGDPAYIPRHNDARNLILKHERDEIIEELVKSYLGKDK</sequence>
<dbReference type="EMBL" id="CR954253">
    <property type="protein sequence ID" value="CAI98395.1"/>
    <property type="molecule type" value="Genomic_DNA"/>
</dbReference>
<dbReference type="RefSeq" id="WP_002876574.1">
    <property type="nucleotide sequence ID" value="NZ_JQAV01000002.1"/>
</dbReference>
<dbReference type="SMR" id="Q1G948"/>
<dbReference type="STRING" id="390333.Ldb1606"/>
<dbReference type="KEGG" id="ldb:Ldb1606"/>
<dbReference type="eggNOG" id="COG4472">
    <property type="taxonomic scope" value="Bacteria"/>
</dbReference>
<dbReference type="HOGENOM" id="CLU_162466_0_0_9"/>
<dbReference type="BioCyc" id="LDEL390333:LDB_RS06935-MONOMER"/>
<dbReference type="Proteomes" id="UP000001259">
    <property type="component" value="Chromosome"/>
</dbReference>
<dbReference type="HAMAP" id="MF_01507">
    <property type="entry name" value="UPF0297"/>
    <property type="match status" value="1"/>
</dbReference>
<dbReference type="InterPro" id="IPR009309">
    <property type="entry name" value="IreB"/>
</dbReference>
<dbReference type="NCBIfam" id="NF003997">
    <property type="entry name" value="PRK05473.1"/>
    <property type="match status" value="1"/>
</dbReference>
<dbReference type="PANTHER" id="PTHR40067">
    <property type="entry name" value="UPF0297 PROTEIN YRZL"/>
    <property type="match status" value="1"/>
</dbReference>
<dbReference type="PANTHER" id="PTHR40067:SF1">
    <property type="entry name" value="UPF0297 PROTEIN YRZL"/>
    <property type="match status" value="1"/>
</dbReference>
<dbReference type="Pfam" id="PF06135">
    <property type="entry name" value="IreB"/>
    <property type="match status" value="1"/>
</dbReference>
<dbReference type="PIRSF" id="PIRSF037258">
    <property type="entry name" value="DUF965_bac"/>
    <property type="match status" value="1"/>
</dbReference>
<keyword id="KW-1185">Reference proteome</keyword>
<reference key="1">
    <citation type="journal article" date="2006" name="Proc. Natl. Acad. Sci. U.S.A.">
        <title>The complete genome sequence of Lactobacillus bulgaricus reveals extensive and ongoing reductive evolution.</title>
        <authorList>
            <person name="van de Guchte M."/>
            <person name="Penaud S."/>
            <person name="Grimaldi C."/>
            <person name="Barbe V."/>
            <person name="Bryson K."/>
            <person name="Nicolas P."/>
            <person name="Robert C."/>
            <person name="Oztas S."/>
            <person name="Mangenot S."/>
            <person name="Couloux A."/>
            <person name="Loux V."/>
            <person name="Dervyn R."/>
            <person name="Bossy R."/>
            <person name="Bolotin A."/>
            <person name="Batto J.-M."/>
            <person name="Walunas T."/>
            <person name="Gibrat J.-F."/>
            <person name="Bessieres P."/>
            <person name="Weissenbach J."/>
            <person name="Ehrlich S.D."/>
            <person name="Maguin E."/>
        </authorList>
    </citation>
    <scope>NUCLEOTIDE SEQUENCE [LARGE SCALE GENOMIC DNA]</scope>
    <source>
        <strain>ATCC 11842 / DSM 20081 / BCRC 10696 / JCM 1002 / NBRC 13953 / NCIMB 11778 / NCTC 12712 / WDCM 00102 / Lb 14</strain>
    </source>
</reference>
<name>Y1606_LACDA</name>
<feature type="chain" id="PRO_0000260070" description="UPF0297 protein Ldb1606">
    <location>
        <begin position="1"/>
        <end position="85"/>
    </location>
</feature>
<protein>
    <recommendedName>
        <fullName evidence="1">UPF0297 protein Ldb1606</fullName>
    </recommendedName>
</protein>